<proteinExistence type="evidence at protein level"/>
<organism>
    <name type="scientific">Mus musculus</name>
    <name type="common">Mouse</name>
    <dbReference type="NCBI Taxonomy" id="10090"/>
    <lineage>
        <taxon>Eukaryota</taxon>
        <taxon>Metazoa</taxon>
        <taxon>Chordata</taxon>
        <taxon>Craniata</taxon>
        <taxon>Vertebrata</taxon>
        <taxon>Euteleostomi</taxon>
        <taxon>Mammalia</taxon>
        <taxon>Eutheria</taxon>
        <taxon>Euarchontoglires</taxon>
        <taxon>Glires</taxon>
        <taxon>Rodentia</taxon>
        <taxon>Myomorpha</taxon>
        <taxon>Muroidea</taxon>
        <taxon>Muridae</taxon>
        <taxon>Murinae</taxon>
        <taxon>Mus</taxon>
        <taxon>Mus</taxon>
    </lineage>
</organism>
<gene>
    <name type="primary">Auh</name>
</gene>
<accession>Q9JLZ3</accession>
<accession>Q80YD7</accession>
<accession>Q8QZS0</accession>
<accession>Q9CY78</accession>
<accession>Q9D155</accession>
<name>AUHM_MOUSE</name>
<reference key="1">
    <citation type="journal article" date="1999" name="Gene">
        <title>Characterisation and mitochondrial localisation of AUH, an AU-specific RNA-binding enoyl-CoA hydratase.</title>
        <authorList>
            <person name="Brennan L.E."/>
            <person name="Nakagawa J."/>
            <person name="Egger D."/>
            <person name="Bienz K."/>
            <person name="Moroni C."/>
        </authorList>
    </citation>
    <scope>NUCLEOTIDE SEQUENCE [MRNA] (ISOFORM 1)</scope>
    <scope>FUNCTION</scope>
    <scope>SUBCELLULAR LOCATION</scope>
    <scope>TISSUE SPECIFICITY</scope>
    <source>
        <strain>BALB/cJ</strain>
        <tissue>Brain</tissue>
    </source>
</reference>
<reference key="2">
    <citation type="journal article" date="2005" name="Science">
        <title>The transcriptional landscape of the mammalian genome.</title>
        <authorList>
            <person name="Carninci P."/>
            <person name="Kasukawa T."/>
            <person name="Katayama S."/>
            <person name="Gough J."/>
            <person name="Frith M.C."/>
            <person name="Maeda N."/>
            <person name="Oyama R."/>
            <person name="Ravasi T."/>
            <person name="Lenhard B."/>
            <person name="Wells C."/>
            <person name="Kodzius R."/>
            <person name="Shimokawa K."/>
            <person name="Bajic V.B."/>
            <person name="Brenner S.E."/>
            <person name="Batalov S."/>
            <person name="Forrest A.R."/>
            <person name="Zavolan M."/>
            <person name="Davis M.J."/>
            <person name="Wilming L.G."/>
            <person name="Aidinis V."/>
            <person name="Allen J.E."/>
            <person name="Ambesi-Impiombato A."/>
            <person name="Apweiler R."/>
            <person name="Aturaliya R.N."/>
            <person name="Bailey T.L."/>
            <person name="Bansal M."/>
            <person name="Baxter L."/>
            <person name="Beisel K.W."/>
            <person name="Bersano T."/>
            <person name="Bono H."/>
            <person name="Chalk A.M."/>
            <person name="Chiu K.P."/>
            <person name="Choudhary V."/>
            <person name="Christoffels A."/>
            <person name="Clutterbuck D.R."/>
            <person name="Crowe M.L."/>
            <person name="Dalla E."/>
            <person name="Dalrymple B.P."/>
            <person name="de Bono B."/>
            <person name="Della Gatta G."/>
            <person name="di Bernardo D."/>
            <person name="Down T."/>
            <person name="Engstrom P."/>
            <person name="Fagiolini M."/>
            <person name="Faulkner G."/>
            <person name="Fletcher C.F."/>
            <person name="Fukushima T."/>
            <person name="Furuno M."/>
            <person name="Futaki S."/>
            <person name="Gariboldi M."/>
            <person name="Georgii-Hemming P."/>
            <person name="Gingeras T.R."/>
            <person name="Gojobori T."/>
            <person name="Green R.E."/>
            <person name="Gustincich S."/>
            <person name="Harbers M."/>
            <person name="Hayashi Y."/>
            <person name="Hensch T.K."/>
            <person name="Hirokawa N."/>
            <person name="Hill D."/>
            <person name="Huminiecki L."/>
            <person name="Iacono M."/>
            <person name="Ikeo K."/>
            <person name="Iwama A."/>
            <person name="Ishikawa T."/>
            <person name="Jakt M."/>
            <person name="Kanapin A."/>
            <person name="Katoh M."/>
            <person name="Kawasawa Y."/>
            <person name="Kelso J."/>
            <person name="Kitamura H."/>
            <person name="Kitano H."/>
            <person name="Kollias G."/>
            <person name="Krishnan S.P."/>
            <person name="Kruger A."/>
            <person name="Kummerfeld S.K."/>
            <person name="Kurochkin I.V."/>
            <person name="Lareau L.F."/>
            <person name="Lazarevic D."/>
            <person name="Lipovich L."/>
            <person name="Liu J."/>
            <person name="Liuni S."/>
            <person name="McWilliam S."/>
            <person name="Madan Babu M."/>
            <person name="Madera M."/>
            <person name="Marchionni L."/>
            <person name="Matsuda H."/>
            <person name="Matsuzawa S."/>
            <person name="Miki H."/>
            <person name="Mignone F."/>
            <person name="Miyake S."/>
            <person name="Morris K."/>
            <person name="Mottagui-Tabar S."/>
            <person name="Mulder N."/>
            <person name="Nakano N."/>
            <person name="Nakauchi H."/>
            <person name="Ng P."/>
            <person name="Nilsson R."/>
            <person name="Nishiguchi S."/>
            <person name="Nishikawa S."/>
            <person name="Nori F."/>
            <person name="Ohara O."/>
            <person name="Okazaki Y."/>
            <person name="Orlando V."/>
            <person name="Pang K.C."/>
            <person name="Pavan W.J."/>
            <person name="Pavesi G."/>
            <person name="Pesole G."/>
            <person name="Petrovsky N."/>
            <person name="Piazza S."/>
            <person name="Reed J."/>
            <person name="Reid J.F."/>
            <person name="Ring B.Z."/>
            <person name="Ringwald M."/>
            <person name="Rost B."/>
            <person name="Ruan Y."/>
            <person name="Salzberg S.L."/>
            <person name="Sandelin A."/>
            <person name="Schneider C."/>
            <person name="Schoenbach C."/>
            <person name="Sekiguchi K."/>
            <person name="Semple C.A."/>
            <person name="Seno S."/>
            <person name="Sessa L."/>
            <person name="Sheng Y."/>
            <person name="Shibata Y."/>
            <person name="Shimada H."/>
            <person name="Shimada K."/>
            <person name="Silva D."/>
            <person name="Sinclair B."/>
            <person name="Sperling S."/>
            <person name="Stupka E."/>
            <person name="Sugiura K."/>
            <person name="Sultana R."/>
            <person name="Takenaka Y."/>
            <person name="Taki K."/>
            <person name="Tammoja K."/>
            <person name="Tan S.L."/>
            <person name="Tang S."/>
            <person name="Taylor M.S."/>
            <person name="Tegner J."/>
            <person name="Teichmann S.A."/>
            <person name="Ueda H.R."/>
            <person name="van Nimwegen E."/>
            <person name="Verardo R."/>
            <person name="Wei C.L."/>
            <person name="Yagi K."/>
            <person name="Yamanishi H."/>
            <person name="Zabarovsky E."/>
            <person name="Zhu S."/>
            <person name="Zimmer A."/>
            <person name="Hide W."/>
            <person name="Bult C."/>
            <person name="Grimmond S.M."/>
            <person name="Teasdale R.D."/>
            <person name="Liu E.T."/>
            <person name="Brusic V."/>
            <person name="Quackenbush J."/>
            <person name="Wahlestedt C."/>
            <person name="Mattick J.S."/>
            <person name="Hume D.A."/>
            <person name="Kai C."/>
            <person name="Sasaki D."/>
            <person name="Tomaru Y."/>
            <person name="Fukuda S."/>
            <person name="Kanamori-Katayama M."/>
            <person name="Suzuki M."/>
            <person name="Aoki J."/>
            <person name="Arakawa T."/>
            <person name="Iida J."/>
            <person name="Imamura K."/>
            <person name="Itoh M."/>
            <person name="Kato T."/>
            <person name="Kawaji H."/>
            <person name="Kawagashira N."/>
            <person name="Kawashima T."/>
            <person name="Kojima M."/>
            <person name="Kondo S."/>
            <person name="Konno H."/>
            <person name="Nakano K."/>
            <person name="Ninomiya N."/>
            <person name="Nishio T."/>
            <person name="Okada M."/>
            <person name="Plessy C."/>
            <person name="Shibata K."/>
            <person name="Shiraki T."/>
            <person name="Suzuki S."/>
            <person name="Tagami M."/>
            <person name="Waki K."/>
            <person name="Watahiki A."/>
            <person name="Okamura-Oho Y."/>
            <person name="Suzuki H."/>
            <person name="Kawai J."/>
            <person name="Hayashizaki Y."/>
        </authorList>
    </citation>
    <scope>NUCLEOTIDE SEQUENCE [LARGE SCALE MRNA] (ISOFORMS 2 AND 3)</scope>
    <source>
        <strain>C57BL/6J</strain>
        <tissue>Embryo</tissue>
    </source>
</reference>
<reference key="3">
    <citation type="journal article" date="2004" name="Genome Res.">
        <title>The status, quality, and expansion of the NIH full-length cDNA project: the Mammalian Gene Collection (MGC).</title>
        <authorList>
            <consortium name="The MGC Project Team"/>
        </authorList>
    </citation>
    <scope>NUCLEOTIDE SEQUENCE [LARGE SCALE MRNA] (ISOFORM 1)</scope>
    <source>
        <tissue>Brain</tissue>
        <tissue>Salivary gland</tissue>
    </source>
</reference>
<reference key="4">
    <citation type="journal article" date="2010" name="Cell">
        <title>A tissue-specific atlas of mouse protein phosphorylation and expression.</title>
        <authorList>
            <person name="Huttlin E.L."/>
            <person name="Jedrychowski M.P."/>
            <person name="Elias J.E."/>
            <person name="Goswami T."/>
            <person name="Rad R."/>
            <person name="Beausoleil S.A."/>
            <person name="Villen J."/>
            <person name="Haas W."/>
            <person name="Sowa M.E."/>
            <person name="Gygi S.P."/>
        </authorList>
    </citation>
    <scope>IDENTIFICATION BY MASS SPECTROMETRY [LARGE SCALE ANALYSIS]</scope>
    <source>
        <tissue>Brain</tissue>
        <tissue>Brown adipose tissue</tissue>
        <tissue>Heart</tissue>
        <tissue>Kidney</tissue>
        <tissue>Liver</tissue>
        <tissue>Lung</tissue>
        <tissue>Pancreas</tissue>
        <tissue>Spleen</tissue>
    </source>
</reference>
<reference key="5">
    <citation type="journal article" date="2013" name="Mol. Cell">
        <title>SIRT5-mediated lysine desuccinylation impacts diverse metabolic pathways.</title>
        <authorList>
            <person name="Park J."/>
            <person name="Chen Y."/>
            <person name="Tishkoff D.X."/>
            <person name="Peng C."/>
            <person name="Tan M."/>
            <person name="Dai L."/>
            <person name="Xie Z."/>
            <person name="Zhang Y."/>
            <person name="Zwaans B.M."/>
            <person name="Skinner M.E."/>
            <person name="Lombard D.B."/>
            <person name="Zhao Y."/>
        </authorList>
    </citation>
    <scope>SUCCINYLATION [LARGE SCALE ANALYSIS] AT LYS-75; LYS-84; LYS-88; LYS-119; LYS-123; LYS-135; LYS-179; LYS-186 AND LYS-304</scope>
    <scope>IDENTIFICATION BY MASS SPECTROMETRY [LARGE SCALE ANALYSIS]</scope>
    <source>
        <tissue>Liver</tissue>
    </source>
</reference>
<reference key="6">
    <citation type="journal article" date="2013" name="Proc. Natl. Acad. Sci. U.S.A.">
        <title>Label-free quantitative proteomics of the lysine acetylome in mitochondria identifies substrates of SIRT3 in metabolic pathways.</title>
        <authorList>
            <person name="Rardin M.J."/>
            <person name="Newman J.C."/>
            <person name="Held J.M."/>
            <person name="Cusack M.P."/>
            <person name="Sorensen D.J."/>
            <person name="Li B."/>
            <person name="Schilling B."/>
            <person name="Mooney S.D."/>
            <person name="Kahn C.R."/>
            <person name="Verdin E."/>
            <person name="Gibson B.W."/>
        </authorList>
    </citation>
    <scope>ACETYLATION [LARGE SCALE ANALYSIS] AT LYS-75; LYS-88; LYS-119; LYS-179 AND LYS-186</scope>
    <scope>IDENTIFICATION BY MASS SPECTROMETRY [LARGE SCALE ANALYSIS]</scope>
    <source>
        <tissue>Liver</tissue>
    </source>
</reference>
<dbReference type="EC" id="4.2.1.18" evidence="1"/>
<dbReference type="EC" id="4.2.1.56" evidence="1"/>
<dbReference type="EMBL" id="AF118386">
    <property type="protein sequence ID" value="AAF28835.1"/>
    <property type="molecule type" value="mRNA"/>
</dbReference>
<dbReference type="EMBL" id="AK003929">
    <property type="protein sequence ID" value="BAB23078.1"/>
    <property type="molecule type" value="mRNA"/>
</dbReference>
<dbReference type="EMBL" id="AK019978">
    <property type="protein sequence ID" value="BAB31947.1"/>
    <property type="molecule type" value="mRNA"/>
</dbReference>
<dbReference type="EMBL" id="BC026525">
    <property type="protein sequence ID" value="AAH26525.1"/>
    <property type="molecule type" value="mRNA"/>
</dbReference>
<dbReference type="EMBL" id="BC049597">
    <property type="protein sequence ID" value="AAH49597.1"/>
    <property type="molecule type" value="mRNA"/>
</dbReference>
<dbReference type="CCDS" id="CCDS26518.1">
    <molecule id="Q9JLZ3-1"/>
</dbReference>
<dbReference type="RefSeq" id="NP_057918.2">
    <property type="nucleotide sequence ID" value="NM_016709.2"/>
</dbReference>
<dbReference type="SMR" id="Q9JLZ3"/>
<dbReference type="BioGRID" id="198280">
    <property type="interactions" value="8"/>
</dbReference>
<dbReference type="FunCoup" id="Q9JLZ3">
    <property type="interactions" value="1598"/>
</dbReference>
<dbReference type="IntAct" id="Q9JLZ3">
    <property type="interactions" value="3"/>
</dbReference>
<dbReference type="MINT" id="Q9JLZ3"/>
<dbReference type="STRING" id="10090.ENSMUSP00000021913"/>
<dbReference type="GlyGen" id="Q9JLZ3">
    <property type="glycosylation" value="1 site, 1 O-linked glycan (1 site)"/>
</dbReference>
<dbReference type="iPTMnet" id="Q9JLZ3"/>
<dbReference type="PhosphoSitePlus" id="Q9JLZ3"/>
<dbReference type="SwissPalm" id="Q9JLZ3"/>
<dbReference type="jPOST" id="Q9JLZ3"/>
<dbReference type="PaxDb" id="10090-ENSMUSP00000021913"/>
<dbReference type="PeptideAtlas" id="Q9JLZ3"/>
<dbReference type="ProteomicsDB" id="273631">
    <molecule id="Q9JLZ3-1"/>
</dbReference>
<dbReference type="ProteomicsDB" id="273632">
    <molecule id="Q9JLZ3-2"/>
</dbReference>
<dbReference type="ProteomicsDB" id="273633">
    <molecule id="Q9JLZ3-3"/>
</dbReference>
<dbReference type="Pumba" id="Q9JLZ3"/>
<dbReference type="GeneID" id="11992"/>
<dbReference type="KEGG" id="mmu:11992"/>
<dbReference type="UCSC" id="uc007qnd.1">
    <molecule id="Q9JLZ3-1"/>
    <property type="organism name" value="mouse"/>
</dbReference>
<dbReference type="AGR" id="MGI:1338011"/>
<dbReference type="CTD" id="549"/>
<dbReference type="MGI" id="MGI:1338011">
    <property type="gene designation" value="Auh"/>
</dbReference>
<dbReference type="eggNOG" id="KOG1679">
    <property type="taxonomic scope" value="Eukaryota"/>
</dbReference>
<dbReference type="InParanoid" id="Q9JLZ3"/>
<dbReference type="OrthoDB" id="410701at2759"/>
<dbReference type="PhylomeDB" id="Q9JLZ3"/>
<dbReference type="TreeFam" id="TF314276"/>
<dbReference type="Reactome" id="R-MMU-70895">
    <property type="pathway name" value="Branched-chain amino acid catabolism"/>
</dbReference>
<dbReference type="UniPathway" id="UPA00363">
    <property type="reaction ID" value="UER00862"/>
</dbReference>
<dbReference type="BioGRID-ORCS" id="11992">
    <property type="hits" value="2 hits in 78 CRISPR screens"/>
</dbReference>
<dbReference type="CD-CODE" id="CE726F99">
    <property type="entry name" value="Postsynaptic density"/>
</dbReference>
<dbReference type="ChiTaRS" id="Auh">
    <property type="organism name" value="mouse"/>
</dbReference>
<dbReference type="PRO" id="PR:Q9JLZ3"/>
<dbReference type="Proteomes" id="UP000000589">
    <property type="component" value="Unplaced"/>
</dbReference>
<dbReference type="RNAct" id="Q9JLZ3">
    <property type="molecule type" value="protein"/>
</dbReference>
<dbReference type="GO" id="GO:0005739">
    <property type="term" value="C:mitochondrion"/>
    <property type="evidence" value="ECO:0000314"/>
    <property type="project" value="MGI"/>
</dbReference>
<dbReference type="GO" id="GO:0004300">
    <property type="term" value="F:enoyl-CoA hydratase activity"/>
    <property type="evidence" value="ECO:0000314"/>
    <property type="project" value="MGI"/>
</dbReference>
<dbReference type="GO" id="GO:0050011">
    <property type="term" value="F:itaconyl-CoA hydratase activity"/>
    <property type="evidence" value="ECO:0007669"/>
    <property type="project" value="UniProtKB-EC"/>
</dbReference>
<dbReference type="GO" id="GO:0004490">
    <property type="term" value="F:methylglutaconyl-CoA hydratase activity"/>
    <property type="evidence" value="ECO:0007669"/>
    <property type="project" value="UniProtKB-EC"/>
</dbReference>
<dbReference type="GO" id="GO:0003730">
    <property type="term" value="F:mRNA 3'-UTR binding"/>
    <property type="evidence" value="ECO:0000250"/>
    <property type="project" value="UniProtKB"/>
</dbReference>
<dbReference type="GO" id="GO:0003723">
    <property type="term" value="F:RNA binding"/>
    <property type="evidence" value="ECO:0000314"/>
    <property type="project" value="MGI"/>
</dbReference>
<dbReference type="GO" id="GO:0006552">
    <property type="term" value="P:L-leucine catabolic process"/>
    <property type="evidence" value="ECO:0007669"/>
    <property type="project" value="UniProtKB-UniPathway"/>
</dbReference>
<dbReference type="CDD" id="cd06558">
    <property type="entry name" value="crotonase-like"/>
    <property type="match status" value="1"/>
</dbReference>
<dbReference type="FunFam" id="3.90.226.10:FF:000022">
    <property type="entry name" value="methylglutaconyl-CoA hydratase, mitochondrial isoform X1"/>
    <property type="match status" value="1"/>
</dbReference>
<dbReference type="FunFam" id="1.10.12.10:FF:000001">
    <property type="entry name" value="Probable enoyl-CoA hydratase, mitochondrial"/>
    <property type="match status" value="1"/>
</dbReference>
<dbReference type="Gene3D" id="3.90.226.10">
    <property type="entry name" value="2-enoyl-CoA Hydratase, Chain A, domain 1"/>
    <property type="match status" value="1"/>
</dbReference>
<dbReference type="Gene3D" id="1.10.12.10">
    <property type="entry name" value="Lyase 2-enoyl-coa Hydratase, Chain A, domain 2"/>
    <property type="match status" value="1"/>
</dbReference>
<dbReference type="InterPro" id="IPR029045">
    <property type="entry name" value="ClpP/crotonase-like_dom_sf"/>
</dbReference>
<dbReference type="InterPro" id="IPR018376">
    <property type="entry name" value="Enoyl-CoA_hyd/isom_CS"/>
</dbReference>
<dbReference type="InterPro" id="IPR001753">
    <property type="entry name" value="Enoyl-CoA_hydra/iso"/>
</dbReference>
<dbReference type="InterPro" id="IPR014748">
    <property type="entry name" value="Enoyl-CoA_hydra_C"/>
</dbReference>
<dbReference type="PANTHER" id="PTHR11941">
    <property type="entry name" value="ENOYL-COA HYDRATASE-RELATED"/>
    <property type="match status" value="1"/>
</dbReference>
<dbReference type="PANTHER" id="PTHR11941:SF12">
    <property type="entry name" value="METHYLGLUTACONYL-COA HYDRATASE, MITOCHONDRIAL"/>
    <property type="match status" value="1"/>
</dbReference>
<dbReference type="Pfam" id="PF00378">
    <property type="entry name" value="ECH_1"/>
    <property type="match status" value="1"/>
</dbReference>
<dbReference type="SUPFAM" id="SSF52096">
    <property type="entry name" value="ClpP/crotonase"/>
    <property type="match status" value="1"/>
</dbReference>
<dbReference type="PROSITE" id="PS00166">
    <property type="entry name" value="ENOYL_COA_HYDRATASE"/>
    <property type="match status" value="1"/>
</dbReference>
<evidence type="ECO:0000250" key="1">
    <source>
        <dbReference type="UniProtKB" id="Q13825"/>
    </source>
</evidence>
<evidence type="ECO:0000269" key="2">
    <source>
    </source>
</evidence>
<evidence type="ECO:0000303" key="3">
    <source>
    </source>
</evidence>
<evidence type="ECO:0000305" key="4"/>
<evidence type="ECO:0007744" key="5">
    <source>
    </source>
</evidence>
<evidence type="ECO:0007744" key="6">
    <source>
    </source>
</evidence>
<keyword id="KW-0007">Acetylation</keyword>
<keyword id="KW-0025">Alternative splicing</keyword>
<keyword id="KW-0101">Branched-chain amino acid catabolism</keyword>
<keyword id="KW-0456">Lyase</keyword>
<keyword id="KW-0496">Mitochondrion</keyword>
<keyword id="KW-1185">Reference proteome</keyword>
<keyword id="KW-0694">RNA-binding</keyword>
<keyword id="KW-0809">Transit peptide</keyword>
<sequence>MAAAAPGALGALRTGRVRLVAACCARLGPAAWARGTAPRRGYSSEVKTEDELRVRHLEEENRGIVVLGINRAYGKNALSKNLLKMLSKAVDALKSDKKVRTIIIRSEVPGIFCAGADLKERAKMHSSEVGPFVSKIRSVINDIANLPVPTIAAIDGLALGGGLELALACDIRVAASSAKMGLVETKLAIIPGGGGTQRLPRAIGMSLAKELIFSARVLDGQEAKAVGLISHVLEQNQEGDAAYRKALDLAREFLPQGPVAMRVAKLAINQGMEVDLVTGLAIEEACYAQTISTKDRLEGLLAFKEKRPPRYKGE</sequence>
<comment type="function">
    <text evidence="1 2">Catalyzes the fifth step in the leucine degradation pathway, the reversible hydration of 3-methylglutaconyl-CoA (3-MG-CoA) to 3-hydroxy-3-methylglutaryl-CoA (HMG-CoA). Can catalyze the reverse reaction but at a much lower rate in vitro. HMG-CoA is then quickly degraded by another enzyme (such as HMG-CoA lyase) to give acetyl-CoA and acetoacetate. Uses other substrates such as (2E)-glutaconyl-CoA efficiently in vitro, and to a lesser extent 3-methylcrotonyl-CoA (3-methyl-(2E)-butenoyl-CoA), crotonyl-CoA ((2E)-butenoyl-CoA) and 3-hydroxybutanoyl-CoA (the missing carboxylate reduces affinity to the active site) (By similarity). Originally it was identified as an RNA-binding protein as it binds to AU-rich elements (AREs) in vitro. AREs direct rapid RNA degradation and mRNA deadenylation (PubMed:10072761). Might have itaconyl-CoA hydratase activity, converting itaconyl-CoA into citramalyl-CoA in the C5-dicarboxylate catabolism pathway. The C5-dicarboxylate catabolism pathway is required to detoxify itaconate, an antimicrobial metabolite and immunomodulator produced by macrophages during certain infections, that can act as a vitamin B12-poisoning metabolite (By similarity).</text>
</comment>
<comment type="catalytic activity">
    <reaction evidence="1">
        <text>(3S)-3-hydroxy-3-methylglutaryl-CoA = 3-methyl-(2E)-glutaconyl-CoA + H2O</text>
        <dbReference type="Rhea" id="RHEA:21536"/>
        <dbReference type="ChEBI" id="CHEBI:15377"/>
        <dbReference type="ChEBI" id="CHEBI:43074"/>
        <dbReference type="ChEBI" id="CHEBI:57346"/>
        <dbReference type="EC" id="4.2.1.18"/>
    </reaction>
    <physiologicalReaction direction="right-to-left" evidence="1">
        <dbReference type="Rhea" id="RHEA:21538"/>
    </physiologicalReaction>
</comment>
<comment type="catalytic activity">
    <reaction evidence="1">
        <text>(3S)-citramalyl-CoA = itaconyl-CoA + H2O</text>
        <dbReference type="Rhea" id="RHEA:13785"/>
        <dbReference type="ChEBI" id="CHEBI:15377"/>
        <dbReference type="ChEBI" id="CHEBI:57381"/>
        <dbReference type="ChEBI" id="CHEBI:58668"/>
        <dbReference type="EC" id="4.2.1.56"/>
    </reaction>
    <physiologicalReaction direction="right-to-left" evidence="1">
        <dbReference type="Rhea" id="RHEA:13787"/>
    </physiologicalReaction>
</comment>
<comment type="catalytic activity">
    <reaction evidence="1">
        <text>3-hydroxyisovaleryl-CoA = 3-methylbut-2-enoyl-CoA + H2O</text>
        <dbReference type="Rhea" id="RHEA:31079"/>
        <dbReference type="ChEBI" id="CHEBI:15377"/>
        <dbReference type="ChEBI" id="CHEBI:57344"/>
        <dbReference type="ChEBI" id="CHEBI:62555"/>
    </reaction>
    <physiologicalReaction direction="right-to-left" evidence="1">
        <dbReference type="Rhea" id="RHEA:31081"/>
    </physiologicalReaction>
</comment>
<comment type="catalytic activity">
    <reaction evidence="1">
        <text>(S)-3-hydroxyglutaryl-CoA = (2E)-glutaconyl-CoA + H2O</text>
        <dbReference type="Rhea" id="RHEA:68456"/>
        <dbReference type="ChEBI" id="CHEBI:15377"/>
        <dbReference type="ChEBI" id="CHEBI:57353"/>
        <dbReference type="ChEBI" id="CHEBI:177916"/>
    </reaction>
    <physiologicalReaction direction="right-to-left" evidence="1">
        <dbReference type="Rhea" id="RHEA:68458"/>
    </physiologicalReaction>
</comment>
<comment type="pathway">
    <text evidence="1">Amino-acid degradation; L-leucine degradation; (S)-3-hydroxy-3-methylglutaryl-CoA from 3-isovaleryl-CoA: step 3/3.</text>
</comment>
<comment type="subunit">
    <text evidence="1">Homohexamer.</text>
</comment>
<comment type="subcellular location">
    <subcellularLocation>
        <location evidence="2">Mitochondrion</location>
    </subcellularLocation>
</comment>
<comment type="alternative products">
    <event type="alternative splicing"/>
    <isoform>
        <id>Q9JLZ3-1</id>
        <name>1</name>
        <sequence type="displayed"/>
    </isoform>
    <isoform>
        <id>Q9JLZ3-2</id>
        <name>2</name>
        <sequence type="described" ref="VSP_008337 VSP_008340"/>
    </isoform>
    <isoform>
        <id>Q9JLZ3-3</id>
        <name>3</name>
        <sequence type="described" ref="VSP_008338 VSP_008339"/>
    </isoform>
</comment>
<comment type="tissue specificity">
    <text evidence="2">Detected in heart, brain, liver, spleen, skeletal muscle and kidney. Expressed in brain, kidney, liver and spleen tissue (at protein level).</text>
</comment>
<comment type="similarity">
    <text evidence="4">Belongs to the enoyl-CoA hydratase/isomerase family.</text>
</comment>
<feature type="transit peptide" description="Mitochondrion" evidence="1">
    <location>
        <begin position="1"/>
        <end position="42"/>
    </location>
</feature>
<feature type="chain" id="PRO_0000007416" description="Methylglutaconyl-CoA hydratase, mitochondrial">
    <location>
        <begin position="43"/>
        <end position="314"/>
    </location>
</feature>
<feature type="region of interest" description="RNA-binding" evidence="1">
    <location>
        <begin position="80"/>
        <end position="94"/>
    </location>
</feature>
<feature type="modified residue" description="N6-acetyllysine; alternate" evidence="5">
    <location>
        <position position="75"/>
    </location>
</feature>
<feature type="modified residue" description="N6-succinyllysine; alternate" evidence="6">
    <location>
        <position position="75"/>
    </location>
</feature>
<feature type="modified residue" description="N6-succinyllysine" evidence="6">
    <location>
        <position position="84"/>
    </location>
</feature>
<feature type="modified residue" description="N6-acetyllysine; alternate" evidence="5">
    <location>
        <position position="88"/>
    </location>
</feature>
<feature type="modified residue" description="N6-succinyllysine; alternate" evidence="6">
    <location>
        <position position="88"/>
    </location>
</feature>
<feature type="modified residue" description="N6-acetyllysine; alternate" evidence="5">
    <location>
        <position position="119"/>
    </location>
</feature>
<feature type="modified residue" description="N6-succinyllysine; alternate" evidence="6">
    <location>
        <position position="119"/>
    </location>
</feature>
<feature type="modified residue" description="N6-succinyllysine" evidence="6">
    <location>
        <position position="123"/>
    </location>
</feature>
<feature type="modified residue" description="N6-succinyllysine" evidence="6">
    <location>
        <position position="135"/>
    </location>
</feature>
<feature type="modified residue" description="N6-acetyllysine; alternate" evidence="5">
    <location>
        <position position="179"/>
    </location>
</feature>
<feature type="modified residue" description="N6-succinyllysine; alternate" evidence="6">
    <location>
        <position position="179"/>
    </location>
</feature>
<feature type="modified residue" description="N6-acetyllysine; alternate" evidence="5">
    <location>
        <position position="186"/>
    </location>
</feature>
<feature type="modified residue" description="N6-succinyllysine; alternate" evidence="6">
    <location>
        <position position="186"/>
    </location>
</feature>
<feature type="modified residue" description="N6-succinyllysine" evidence="6">
    <location>
        <position position="304"/>
    </location>
</feature>
<feature type="splice variant" id="VSP_008337" description="In isoform 2." evidence="3">
    <original>GADLKERAKMHSSEVGPFVSKIRSVINDIANLPVPTIAAIDGL</original>
    <variation>VSFQLKADIQLCFQFAPFWWPLQSHSSQKPEVTPDSRCSPQIW</variation>
    <location>
        <begin position="115"/>
        <end position="157"/>
    </location>
</feature>
<feature type="splice variant" id="VSP_008338" description="In isoform 3." evidence="3">
    <original>A</original>
    <variation>V</variation>
    <location>
        <position position="144"/>
    </location>
</feature>
<feature type="splice variant" id="VSP_008339" description="In isoform 3." evidence="3">
    <location>
        <begin position="145"/>
        <end position="314"/>
    </location>
</feature>
<feature type="splice variant" id="VSP_008340" description="In isoform 2." evidence="3">
    <location>
        <begin position="159"/>
        <end position="314"/>
    </location>
</feature>
<feature type="sequence conflict" description="In Ref. 2; BAB23078/BAB31947 and 3; AAH49597." evidence="4" ref="2 3">
    <original>GR</original>
    <variation>VG</variation>
    <location>
        <begin position="15"/>
        <end position="16"/>
    </location>
</feature>
<feature type="sequence conflict" description="In Ref. 2; BAB23078." evidence="4" ref="2">
    <original>A</original>
    <variation>P</variation>
    <location>
        <position position="22"/>
    </location>
</feature>
<protein>
    <recommendedName>
        <fullName>Methylglutaconyl-CoA hydratase, mitochondrial</fullName>
        <shortName>3-MG-CoA hydratase</shortName>
        <ecNumber evidence="1">4.2.1.18</ecNumber>
    </recommendedName>
    <alternativeName>
        <fullName>AU-specific RNA-binding enoyl-CoA hydratase</fullName>
        <shortName>AU-binding enoyl-CoA hydratase</shortName>
        <shortName>muAUH</shortName>
    </alternativeName>
    <alternativeName>
        <fullName>Itaconyl-CoA hydratase</fullName>
        <ecNumber evidence="1">4.2.1.56</ecNumber>
    </alternativeName>
</protein>